<gene>
    <name evidence="1" type="primary">rpmH</name>
    <name type="ordered locus">BruAb2_0961</name>
</gene>
<comment type="similarity">
    <text evidence="1">Belongs to the bacterial ribosomal protein bL34 family.</text>
</comment>
<accession>Q576U2</accession>
<sequence>MKRTYQPSKIVRKRRHGFRARMATTGGRKVLAARRTRGRKRLSA</sequence>
<name>RL34_BRUAB</name>
<keyword id="KW-0687">Ribonucleoprotein</keyword>
<keyword id="KW-0689">Ribosomal protein</keyword>
<protein>
    <recommendedName>
        <fullName evidence="1">Large ribosomal subunit protein bL34</fullName>
    </recommendedName>
    <alternativeName>
        <fullName evidence="2">50S ribosomal protein L34</fullName>
    </alternativeName>
</protein>
<feature type="chain" id="PRO_0000187352" description="Large ribosomal subunit protein bL34">
    <location>
        <begin position="1"/>
        <end position="44"/>
    </location>
</feature>
<reference key="1">
    <citation type="journal article" date="2005" name="J. Bacteriol.">
        <title>Completion of the genome sequence of Brucella abortus and comparison to the highly similar genomes of Brucella melitensis and Brucella suis.</title>
        <authorList>
            <person name="Halling S.M."/>
            <person name="Peterson-Burch B.D."/>
            <person name="Bricker B.J."/>
            <person name="Zuerner R.L."/>
            <person name="Qing Z."/>
            <person name="Li L.-L."/>
            <person name="Kapur V."/>
            <person name="Alt D.P."/>
            <person name="Olsen S.C."/>
        </authorList>
    </citation>
    <scope>NUCLEOTIDE SEQUENCE [LARGE SCALE GENOMIC DNA]</scope>
    <source>
        <strain>9-941</strain>
    </source>
</reference>
<dbReference type="EMBL" id="AE017224">
    <property type="protein sequence ID" value="AAX76342.1"/>
    <property type="molecule type" value="Genomic_DNA"/>
</dbReference>
<dbReference type="RefSeq" id="WP_002965629.1">
    <property type="nucleotide sequence ID" value="NC_006933.1"/>
</dbReference>
<dbReference type="SMR" id="Q576U2"/>
<dbReference type="EnsemblBacteria" id="AAX76342">
    <property type="protein sequence ID" value="AAX76342"/>
    <property type="gene ID" value="BruAb2_0961"/>
</dbReference>
<dbReference type="GeneID" id="97534928"/>
<dbReference type="KEGG" id="bmb:BruAb2_0961"/>
<dbReference type="HOGENOM" id="CLU_129938_2_0_5"/>
<dbReference type="Proteomes" id="UP000000540">
    <property type="component" value="Chromosome II"/>
</dbReference>
<dbReference type="GO" id="GO:1990904">
    <property type="term" value="C:ribonucleoprotein complex"/>
    <property type="evidence" value="ECO:0007669"/>
    <property type="project" value="UniProtKB-KW"/>
</dbReference>
<dbReference type="GO" id="GO:0005840">
    <property type="term" value="C:ribosome"/>
    <property type="evidence" value="ECO:0007669"/>
    <property type="project" value="UniProtKB-KW"/>
</dbReference>
<dbReference type="GO" id="GO:0003735">
    <property type="term" value="F:structural constituent of ribosome"/>
    <property type="evidence" value="ECO:0007669"/>
    <property type="project" value="InterPro"/>
</dbReference>
<dbReference type="GO" id="GO:0006412">
    <property type="term" value="P:translation"/>
    <property type="evidence" value="ECO:0007669"/>
    <property type="project" value="UniProtKB-UniRule"/>
</dbReference>
<dbReference type="FunFam" id="1.10.287.3980:FF:000001">
    <property type="entry name" value="Mitochondrial ribosomal protein L34"/>
    <property type="match status" value="1"/>
</dbReference>
<dbReference type="Gene3D" id="1.10.287.3980">
    <property type="match status" value="1"/>
</dbReference>
<dbReference type="HAMAP" id="MF_00391">
    <property type="entry name" value="Ribosomal_bL34"/>
    <property type="match status" value="1"/>
</dbReference>
<dbReference type="InterPro" id="IPR000271">
    <property type="entry name" value="Ribosomal_bL34"/>
</dbReference>
<dbReference type="InterPro" id="IPR020939">
    <property type="entry name" value="Ribosomal_bL34_CS"/>
</dbReference>
<dbReference type="NCBIfam" id="TIGR01030">
    <property type="entry name" value="rpmH_bact"/>
    <property type="match status" value="1"/>
</dbReference>
<dbReference type="PANTHER" id="PTHR14503:SF4">
    <property type="entry name" value="LARGE RIBOSOMAL SUBUNIT PROTEIN BL34M"/>
    <property type="match status" value="1"/>
</dbReference>
<dbReference type="PANTHER" id="PTHR14503">
    <property type="entry name" value="MITOCHONDRIAL RIBOSOMAL PROTEIN 34 FAMILY MEMBER"/>
    <property type="match status" value="1"/>
</dbReference>
<dbReference type="Pfam" id="PF00468">
    <property type="entry name" value="Ribosomal_L34"/>
    <property type="match status" value="1"/>
</dbReference>
<dbReference type="PROSITE" id="PS00784">
    <property type="entry name" value="RIBOSOMAL_L34"/>
    <property type="match status" value="1"/>
</dbReference>
<organism>
    <name type="scientific">Brucella abortus biovar 1 (strain 9-941)</name>
    <dbReference type="NCBI Taxonomy" id="262698"/>
    <lineage>
        <taxon>Bacteria</taxon>
        <taxon>Pseudomonadati</taxon>
        <taxon>Pseudomonadota</taxon>
        <taxon>Alphaproteobacteria</taxon>
        <taxon>Hyphomicrobiales</taxon>
        <taxon>Brucellaceae</taxon>
        <taxon>Brucella/Ochrobactrum group</taxon>
        <taxon>Brucella</taxon>
    </lineage>
</organism>
<proteinExistence type="inferred from homology"/>
<evidence type="ECO:0000255" key="1">
    <source>
        <dbReference type="HAMAP-Rule" id="MF_00391"/>
    </source>
</evidence>
<evidence type="ECO:0000305" key="2"/>